<proteinExistence type="evidence at transcript level"/>
<dbReference type="EC" id="2.3.1.-" evidence="4"/>
<dbReference type="EMBL" id="AP005919">
    <property type="protein sequence ID" value="BAD72527.1"/>
    <property type="molecule type" value="Genomic_DNA"/>
</dbReference>
<dbReference type="EMBL" id="AP008212">
    <property type="protein sequence ID" value="BAH93370.1"/>
    <property type="molecule type" value="Genomic_DNA"/>
</dbReference>
<dbReference type="EMBL" id="AP014962">
    <property type="protein sequence ID" value="BAS96508.1"/>
    <property type="molecule type" value="Genomic_DNA"/>
</dbReference>
<dbReference type="EMBL" id="AK109116">
    <property type="protein sequence ID" value="BAG98608.1"/>
    <property type="molecule type" value="mRNA"/>
</dbReference>
<dbReference type="SMR" id="Q5SMQ0"/>
<dbReference type="FunCoup" id="Q5SMQ0">
    <property type="interactions" value="4"/>
</dbReference>
<dbReference type="STRING" id="39947.Q5SMQ0"/>
<dbReference type="PaxDb" id="39947-Q5SMQ0"/>
<dbReference type="EnsemblPlants" id="Os06t0185300-01">
    <property type="protein sequence ID" value="Os06t0185300-01"/>
    <property type="gene ID" value="Os06g0185300"/>
</dbReference>
<dbReference type="GeneID" id="9268895"/>
<dbReference type="Gramene" id="Os06t0185300-01">
    <property type="protein sequence ID" value="Os06t0185300-01"/>
    <property type="gene ID" value="Os06g0185300"/>
</dbReference>
<dbReference type="KEGG" id="dosa:Os06g0185200"/>
<dbReference type="KEGG" id="osa:9268895"/>
<dbReference type="eggNOG" id="ENOG502QTJX">
    <property type="taxonomic scope" value="Eukaryota"/>
</dbReference>
<dbReference type="HOGENOM" id="CLU_014546_2_0_1"/>
<dbReference type="InParanoid" id="Q5SMQ0"/>
<dbReference type="OMA" id="KYISEDW"/>
<dbReference type="OrthoDB" id="671439at2759"/>
<dbReference type="Proteomes" id="UP000000763">
    <property type="component" value="Chromosome 6"/>
</dbReference>
<dbReference type="Proteomes" id="UP000059680">
    <property type="component" value="Chromosome 6"/>
</dbReference>
<dbReference type="ExpressionAtlas" id="Q5SMQ0">
    <property type="expression patterns" value="baseline and differential"/>
</dbReference>
<dbReference type="GO" id="GO:0016747">
    <property type="term" value="F:acyltransferase activity, transferring groups other than amino-acyl groups"/>
    <property type="evidence" value="ECO:0000318"/>
    <property type="project" value="GO_Central"/>
</dbReference>
<dbReference type="GO" id="GO:0050734">
    <property type="term" value="F:hydroxycinnamoyltransferase activity"/>
    <property type="evidence" value="ECO:0000314"/>
    <property type="project" value="UniProtKB"/>
</dbReference>
<dbReference type="FunFam" id="3.30.559.10:FF:000068">
    <property type="entry name" value="Putrescine hydroxycinnamoyltransferase 2"/>
    <property type="match status" value="1"/>
</dbReference>
<dbReference type="Gene3D" id="3.30.559.10">
    <property type="entry name" value="Chloramphenicol acetyltransferase-like domain"/>
    <property type="match status" value="2"/>
</dbReference>
<dbReference type="InterPro" id="IPR023213">
    <property type="entry name" value="CAT-like_dom_sf"/>
</dbReference>
<dbReference type="InterPro" id="IPR050317">
    <property type="entry name" value="Plant_Fungal_Acyltransferase"/>
</dbReference>
<dbReference type="PANTHER" id="PTHR31642:SF56">
    <property type="entry name" value="PUTRESCINE HYDROXYCINNAMOYLTRANSFERASE 2"/>
    <property type="match status" value="1"/>
</dbReference>
<dbReference type="PANTHER" id="PTHR31642">
    <property type="entry name" value="TRICHOTHECENE 3-O-ACETYLTRANSFERASE"/>
    <property type="match status" value="1"/>
</dbReference>
<dbReference type="Pfam" id="PF02458">
    <property type="entry name" value="Transferase"/>
    <property type="match status" value="1"/>
</dbReference>
<dbReference type="SUPFAM" id="SSF52777">
    <property type="entry name" value="CoA-dependent acyltransferases"/>
    <property type="match status" value="1"/>
</dbReference>
<sequence>MATVEVLTSEVVAPAEETPAGAVWLSNLDLAARRGYTPTVYFYRRNGDDEAAFFAADAVRDGLARALVPFYPLAGRLGLAGGGEDGRVQIDCTGEGAVFVTARSGHYALDDLMNEFVPCDEMRDLFVPPTPPPNPPCALLLVQVTHLRCGGVVLGMALHHSVVDARSAAHFAETWASIVRGAPAGDAPVPPCFDHKLLAARPARAVLYDHPEYKPEPAPAPAHAATASTYASAIITLTKQQVGALKAACAGASTFRAVVALVWQCACRARSLPPDKANLFLLYKYISEDWVDIQLNIQQRDNCIYAPTLKANCCFTPTF</sequence>
<evidence type="ECO:0000250" key="1">
    <source>
        <dbReference type="UniProtKB" id="Q8W1W9"/>
    </source>
</evidence>
<evidence type="ECO:0000269" key="2">
    <source>
    </source>
</evidence>
<evidence type="ECO:0000303" key="3">
    <source>
    </source>
</evidence>
<evidence type="ECO:0000305" key="4"/>
<evidence type="ECO:0000312" key="5">
    <source>
        <dbReference type="EMBL" id="BAD72527.1"/>
    </source>
</evidence>
<evidence type="ECO:0000312" key="6">
    <source>
        <dbReference type="EMBL" id="BAS96508.1"/>
    </source>
</evidence>
<keyword id="KW-0012">Acyltransferase</keyword>
<keyword id="KW-1185">Reference proteome</keyword>
<keyword id="KW-0808">Transferase</keyword>
<comment type="function">
    <text evidence="2">Hydroxycinnamoyl transferase that catalyzes the transfer of an acyl from p-coumaryol-CoA to putrescine, to produce coumaroyl putrescine.</text>
</comment>
<comment type="similarity">
    <text evidence="4">Belongs to the plant acyltransferase family.</text>
</comment>
<reference key="1">
    <citation type="journal article" date="2005" name="Nature">
        <title>The map-based sequence of the rice genome.</title>
        <authorList>
            <consortium name="International rice genome sequencing project (IRGSP)"/>
        </authorList>
    </citation>
    <scope>NUCLEOTIDE SEQUENCE [LARGE SCALE GENOMIC DNA]</scope>
    <source>
        <strain>cv. Nipponbare</strain>
    </source>
</reference>
<reference key="2">
    <citation type="journal article" date="2008" name="Nucleic Acids Res.">
        <title>The rice annotation project database (RAP-DB): 2008 update.</title>
        <authorList>
            <consortium name="The rice annotation project (RAP)"/>
        </authorList>
    </citation>
    <scope>GENOME REANNOTATION</scope>
    <source>
        <strain>cv. Nipponbare</strain>
    </source>
</reference>
<reference key="3">
    <citation type="journal article" date="2013" name="Rice">
        <title>Improvement of the Oryza sativa Nipponbare reference genome using next generation sequence and optical map data.</title>
        <authorList>
            <person name="Kawahara Y."/>
            <person name="de la Bastide M."/>
            <person name="Hamilton J.P."/>
            <person name="Kanamori H."/>
            <person name="McCombie W.R."/>
            <person name="Ouyang S."/>
            <person name="Schwartz D.C."/>
            <person name="Tanaka T."/>
            <person name="Wu J."/>
            <person name="Zhou S."/>
            <person name="Childs K.L."/>
            <person name="Davidson R.M."/>
            <person name="Lin H."/>
            <person name="Quesada-Ocampo L."/>
            <person name="Vaillancourt B."/>
            <person name="Sakai H."/>
            <person name="Lee S.S."/>
            <person name="Kim J."/>
            <person name="Numa H."/>
            <person name="Itoh T."/>
            <person name="Buell C.R."/>
            <person name="Matsumoto T."/>
        </authorList>
    </citation>
    <scope>GENOME REANNOTATION</scope>
    <source>
        <strain>cv. Nipponbare</strain>
    </source>
</reference>
<reference key="4">
    <citation type="journal article" date="2003" name="Science">
        <title>Collection, mapping, and annotation of over 28,000 cDNA clones from japonica rice.</title>
        <authorList>
            <consortium name="The rice full-length cDNA consortium"/>
        </authorList>
    </citation>
    <scope>NUCLEOTIDE SEQUENCE [LARGE SCALE MRNA]</scope>
    <source>
        <strain>cv. Nipponbare</strain>
    </source>
</reference>
<reference key="5">
    <citation type="journal article" date="2016" name="Plant Cell">
        <title>Evolutionarily distinct BAHD N-acyltransferases are responsible for natural variation of aromatic amine conjugates in rice.</title>
        <authorList>
            <person name="Peng M."/>
            <person name="Gao Y."/>
            <person name="Chen W."/>
            <person name="Wang W."/>
            <person name="Shen S."/>
            <person name="Shi J."/>
            <person name="Wang C."/>
            <person name="Zhang Y."/>
            <person name="Zou L."/>
            <person name="Wang S."/>
            <person name="Wan J."/>
            <person name="Liu X."/>
            <person name="Gong L."/>
            <person name="Luo J."/>
        </authorList>
    </citation>
    <scope>FUNCTION</scope>
</reference>
<protein>
    <recommendedName>
        <fullName evidence="4">Putrescine hydroxycinnamoyltransferase 2</fullName>
        <shortName evidence="3">OsPHT2</shortName>
        <ecNumber evidence="4">2.3.1.-</ecNumber>
    </recommendedName>
</protein>
<name>PHT2_ORYSJ</name>
<accession>Q5SMQ0</accession>
<feature type="chain" id="PRO_0000437757" description="Putrescine hydroxycinnamoyltransferase 2">
    <location>
        <begin position="1"/>
        <end position="319"/>
    </location>
</feature>
<feature type="active site" description="Proton acceptor" evidence="1">
    <location>
        <position position="160"/>
    </location>
</feature>
<feature type="active site" description="Proton acceptor" evidence="1">
    <location>
        <position position="301"/>
    </location>
</feature>
<gene>
    <name evidence="3" type="primary">PHT2</name>
    <name evidence="6" type="ordered locus">Os06g0185300</name>
    <name evidence="4" type="ordered locus">LOC_Os06g08610</name>
    <name evidence="5" type="ORF">P0554A06.28</name>
</gene>
<organism>
    <name type="scientific">Oryza sativa subsp. japonica</name>
    <name type="common">Rice</name>
    <dbReference type="NCBI Taxonomy" id="39947"/>
    <lineage>
        <taxon>Eukaryota</taxon>
        <taxon>Viridiplantae</taxon>
        <taxon>Streptophyta</taxon>
        <taxon>Embryophyta</taxon>
        <taxon>Tracheophyta</taxon>
        <taxon>Spermatophyta</taxon>
        <taxon>Magnoliopsida</taxon>
        <taxon>Liliopsida</taxon>
        <taxon>Poales</taxon>
        <taxon>Poaceae</taxon>
        <taxon>BOP clade</taxon>
        <taxon>Oryzoideae</taxon>
        <taxon>Oryzeae</taxon>
        <taxon>Oryzinae</taxon>
        <taxon>Oryza</taxon>
        <taxon>Oryza sativa</taxon>
    </lineage>
</organism>